<accession>P0CQ87</accession>
<accession>Q55NB1</accession>
<accession>Q5KBP4</accession>
<accession>Q5KBP5</accession>
<reference key="1">
    <citation type="journal article" date="2005" name="Science">
        <title>The genome of the basidiomycetous yeast and human pathogen Cryptococcus neoformans.</title>
        <authorList>
            <person name="Loftus B.J."/>
            <person name="Fung E."/>
            <person name="Roncaglia P."/>
            <person name="Rowley D."/>
            <person name="Amedeo P."/>
            <person name="Bruno D."/>
            <person name="Vamathevan J."/>
            <person name="Miranda M."/>
            <person name="Anderson I.J."/>
            <person name="Fraser J.A."/>
            <person name="Allen J.E."/>
            <person name="Bosdet I.E."/>
            <person name="Brent M.R."/>
            <person name="Chiu R."/>
            <person name="Doering T.L."/>
            <person name="Donlin M.J."/>
            <person name="D'Souza C.A."/>
            <person name="Fox D.S."/>
            <person name="Grinberg V."/>
            <person name="Fu J."/>
            <person name="Fukushima M."/>
            <person name="Haas B.J."/>
            <person name="Huang J.C."/>
            <person name="Janbon G."/>
            <person name="Jones S.J.M."/>
            <person name="Koo H.L."/>
            <person name="Krzywinski M.I."/>
            <person name="Kwon-Chung K.J."/>
            <person name="Lengeler K.B."/>
            <person name="Maiti R."/>
            <person name="Marra M.A."/>
            <person name="Marra R.E."/>
            <person name="Mathewson C.A."/>
            <person name="Mitchell T.G."/>
            <person name="Pertea M."/>
            <person name="Riggs F.R."/>
            <person name="Salzberg S.L."/>
            <person name="Schein J.E."/>
            <person name="Shvartsbeyn A."/>
            <person name="Shin H."/>
            <person name="Shumway M."/>
            <person name="Specht C.A."/>
            <person name="Suh B.B."/>
            <person name="Tenney A."/>
            <person name="Utterback T.R."/>
            <person name="Wickes B.L."/>
            <person name="Wortman J.R."/>
            <person name="Wye N.H."/>
            <person name="Kronstad J.W."/>
            <person name="Lodge J.K."/>
            <person name="Heitman J."/>
            <person name="Davis R.W."/>
            <person name="Fraser C.M."/>
            <person name="Hyman R.W."/>
        </authorList>
    </citation>
    <scope>NUCLEOTIDE SEQUENCE [LARGE SCALE GENOMIC DNA]</scope>
    <source>
        <strain>B-3501A</strain>
    </source>
</reference>
<protein>
    <recommendedName>
        <fullName>ATP-dependent RNA helicase DBP5</fullName>
        <ecNumber>3.6.4.13</ecNumber>
    </recommendedName>
</protein>
<dbReference type="EC" id="3.6.4.13"/>
<dbReference type="EMBL" id="AAEY01000042">
    <property type="protein sequence ID" value="EAL19074.1"/>
    <property type="molecule type" value="Genomic_DNA"/>
</dbReference>
<dbReference type="RefSeq" id="XP_773721.1">
    <property type="nucleotide sequence ID" value="XM_768628.1"/>
</dbReference>
<dbReference type="SMR" id="P0CQ87"/>
<dbReference type="GeneID" id="4937698"/>
<dbReference type="KEGG" id="cnb:CNBH1760"/>
<dbReference type="VEuPathDB" id="FungiDB:CNBH1760"/>
<dbReference type="HOGENOM" id="CLU_003041_1_0_1"/>
<dbReference type="OrthoDB" id="4645at5206"/>
<dbReference type="GO" id="GO:0005934">
    <property type="term" value="C:cellular bud tip"/>
    <property type="evidence" value="ECO:0007669"/>
    <property type="project" value="EnsemblFungi"/>
</dbReference>
<dbReference type="GO" id="GO:0010494">
    <property type="term" value="C:cytoplasmic stress granule"/>
    <property type="evidence" value="ECO:0007669"/>
    <property type="project" value="EnsemblFungi"/>
</dbReference>
<dbReference type="GO" id="GO:0031965">
    <property type="term" value="C:nuclear membrane"/>
    <property type="evidence" value="ECO:0007669"/>
    <property type="project" value="UniProtKB-SubCell"/>
</dbReference>
<dbReference type="GO" id="GO:0044614">
    <property type="term" value="C:nuclear pore cytoplasmic filaments"/>
    <property type="evidence" value="ECO:0007669"/>
    <property type="project" value="EnsemblFungi"/>
</dbReference>
<dbReference type="GO" id="GO:0005524">
    <property type="term" value="F:ATP binding"/>
    <property type="evidence" value="ECO:0007669"/>
    <property type="project" value="UniProtKB-KW"/>
</dbReference>
<dbReference type="GO" id="GO:0016887">
    <property type="term" value="F:ATP hydrolysis activity"/>
    <property type="evidence" value="ECO:0007669"/>
    <property type="project" value="RHEA"/>
</dbReference>
<dbReference type="GO" id="GO:0000822">
    <property type="term" value="F:inositol hexakisphosphate binding"/>
    <property type="evidence" value="ECO:0007669"/>
    <property type="project" value="EnsemblFungi"/>
</dbReference>
<dbReference type="GO" id="GO:0003723">
    <property type="term" value="F:RNA binding"/>
    <property type="evidence" value="ECO:0007669"/>
    <property type="project" value="UniProtKB-KW"/>
</dbReference>
<dbReference type="GO" id="GO:0003724">
    <property type="term" value="F:RNA helicase activity"/>
    <property type="evidence" value="ECO:0007669"/>
    <property type="project" value="UniProtKB-EC"/>
</dbReference>
<dbReference type="GO" id="GO:0016973">
    <property type="term" value="P:poly(A)+ mRNA export from nucleus"/>
    <property type="evidence" value="ECO:0007669"/>
    <property type="project" value="EnsemblFungi"/>
</dbReference>
<dbReference type="GO" id="GO:0015031">
    <property type="term" value="P:protein transport"/>
    <property type="evidence" value="ECO:0007669"/>
    <property type="project" value="UniProtKB-KW"/>
</dbReference>
<dbReference type="GO" id="GO:0006415">
    <property type="term" value="P:translational termination"/>
    <property type="evidence" value="ECO:0007669"/>
    <property type="project" value="EnsemblFungi"/>
</dbReference>
<dbReference type="GO" id="GO:0006409">
    <property type="term" value="P:tRNA export from nucleus"/>
    <property type="evidence" value="ECO:0007669"/>
    <property type="project" value="EnsemblFungi"/>
</dbReference>
<dbReference type="CDD" id="cd17963">
    <property type="entry name" value="DEADc_DDX19_DDX25"/>
    <property type="match status" value="1"/>
</dbReference>
<dbReference type="CDD" id="cd18787">
    <property type="entry name" value="SF2_C_DEAD"/>
    <property type="match status" value="1"/>
</dbReference>
<dbReference type="FunFam" id="3.40.50.300:FF:000849">
    <property type="entry name" value="ATP-dependent RNA helicase DBP5"/>
    <property type="match status" value="1"/>
</dbReference>
<dbReference type="Gene3D" id="3.40.50.300">
    <property type="entry name" value="P-loop containing nucleotide triphosphate hydrolases"/>
    <property type="match status" value="2"/>
</dbReference>
<dbReference type="InterPro" id="IPR011545">
    <property type="entry name" value="DEAD/DEAH_box_helicase_dom"/>
</dbReference>
<dbReference type="InterPro" id="IPR014001">
    <property type="entry name" value="Helicase_ATP-bd"/>
</dbReference>
<dbReference type="InterPro" id="IPR001650">
    <property type="entry name" value="Helicase_C-like"/>
</dbReference>
<dbReference type="InterPro" id="IPR027417">
    <property type="entry name" value="P-loop_NTPase"/>
</dbReference>
<dbReference type="InterPro" id="IPR000629">
    <property type="entry name" value="RNA-helicase_DEAD-box_CS"/>
</dbReference>
<dbReference type="InterPro" id="IPR014014">
    <property type="entry name" value="RNA_helicase_DEAD_Q_motif"/>
</dbReference>
<dbReference type="PANTHER" id="PTHR47958">
    <property type="entry name" value="ATP-DEPENDENT RNA HELICASE DBP3"/>
    <property type="match status" value="1"/>
</dbReference>
<dbReference type="Pfam" id="PF00270">
    <property type="entry name" value="DEAD"/>
    <property type="match status" value="1"/>
</dbReference>
<dbReference type="Pfam" id="PF00271">
    <property type="entry name" value="Helicase_C"/>
    <property type="match status" value="1"/>
</dbReference>
<dbReference type="SMART" id="SM00487">
    <property type="entry name" value="DEXDc"/>
    <property type="match status" value="1"/>
</dbReference>
<dbReference type="SMART" id="SM00490">
    <property type="entry name" value="HELICc"/>
    <property type="match status" value="1"/>
</dbReference>
<dbReference type="SUPFAM" id="SSF52540">
    <property type="entry name" value="P-loop containing nucleoside triphosphate hydrolases"/>
    <property type="match status" value="1"/>
</dbReference>
<dbReference type="PROSITE" id="PS00039">
    <property type="entry name" value="DEAD_ATP_HELICASE"/>
    <property type="match status" value="1"/>
</dbReference>
<dbReference type="PROSITE" id="PS51192">
    <property type="entry name" value="HELICASE_ATP_BIND_1"/>
    <property type="match status" value="1"/>
</dbReference>
<dbReference type="PROSITE" id="PS51194">
    <property type="entry name" value="HELICASE_CTER"/>
    <property type="match status" value="1"/>
</dbReference>
<dbReference type="PROSITE" id="PS51195">
    <property type="entry name" value="Q_MOTIF"/>
    <property type="match status" value="1"/>
</dbReference>
<gene>
    <name type="primary">DBP5</name>
    <name type="ordered locus">CNBH1760</name>
</gene>
<comment type="function">
    <text evidence="1">ATP-dependent RNA helicase associated with the nuclear pore complex and essential for mRNA export from the nucleus. May participate in a terminal step of mRNA export through the removal of proteins that accompany mRNA through the nucleopore complex. May also be involved in early transcription (By similarity).</text>
</comment>
<comment type="catalytic activity">
    <reaction>
        <text>ATP + H2O = ADP + phosphate + H(+)</text>
        <dbReference type="Rhea" id="RHEA:13065"/>
        <dbReference type="ChEBI" id="CHEBI:15377"/>
        <dbReference type="ChEBI" id="CHEBI:15378"/>
        <dbReference type="ChEBI" id="CHEBI:30616"/>
        <dbReference type="ChEBI" id="CHEBI:43474"/>
        <dbReference type="ChEBI" id="CHEBI:456216"/>
        <dbReference type="EC" id="3.6.4.13"/>
    </reaction>
</comment>
<comment type="subunit">
    <text evidence="1">Associates with the nuclear pore complex.</text>
</comment>
<comment type="subcellular location">
    <subcellularLocation>
        <location evidence="1">Cytoplasm</location>
    </subcellularLocation>
    <subcellularLocation>
        <location>Nucleus</location>
        <location>Nuclear pore complex</location>
    </subcellularLocation>
    <subcellularLocation>
        <location evidence="1">Nucleus membrane</location>
        <topology evidence="1">Peripheral membrane protein</topology>
        <orientation evidence="1">Cytoplasmic side</orientation>
    </subcellularLocation>
    <text evidence="1">Nuclear pore complex cytoplasmic fibrils.</text>
</comment>
<comment type="domain">
    <text>The Q motif is unique to and characteristic of the DEAD box family of RNA helicases and controls ATP binding and hydrolysis.</text>
</comment>
<comment type="similarity">
    <text evidence="5">Belongs to the DEAD box helicase family. DDX19/DBP5 subfamily.</text>
</comment>
<keyword id="KW-0067">ATP-binding</keyword>
<keyword id="KW-0963">Cytoplasm</keyword>
<keyword id="KW-0347">Helicase</keyword>
<keyword id="KW-0378">Hydrolase</keyword>
<keyword id="KW-0472">Membrane</keyword>
<keyword id="KW-0509">mRNA transport</keyword>
<keyword id="KW-0906">Nuclear pore complex</keyword>
<keyword id="KW-0547">Nucleotide-binding</keyword>
<keyword id="KW-0539">Nucleus</keyword>
<keyword id="KW-0653">Protein transport</keyword>
<keyword id="KW-0694">RNA-binding</keyword>
<keyword id="KW-0811">Translocation</keyword>
<keyword id="KW-0813">Transport</keyword>
<organism>
    <name type="scientific">Cryptococcus neoformans var. neoformans serotype D (strain B-3501A)</name>
    <name type="common">Filobasidiella neoformans</name>
    <dbReference type="NCBI Taxonomy" id="283643"/>
    <lineage>
        <taxon>Eukaryota</taxon>
        <taxon>Fungi</taxon>
        <taxon>Dikarya</taxon>
        <taxon>Basidiomycota</taxon>
        <taxon>Agaricomycotina</taxon>
        <taxon>Tremellomycetes</taxon>
        <taxon>Tremellales</taxon>
        <taxon>Cryptococcaceae</taxon>
        <taxon>Cryptococcus</taxon>
        <taxon>Cryptococcus neoformans species complex</taxon>
    </lineage>
</organism>
<feature type="chain" id="PRO_0000410254" description="ATP-dependent RNA helicase DBP5">
    <location>
        <begin position="1"/>
        <end position="546"/>
    </location>
</feature>
<feature type="domain" description="Helicase ATP-binding" evidence="2">
    <location>
        <begin position="181"/>
        <end position="350"/>
    </location>
</feature>
<feature type="domain" description="Helicase C-terminal" evidence="3">
    <location>
        <begin position="361"/>
        <end position="531"/>
    </location>
</feature>
<feature type="region of interest" description="Disordered" evidence="4">
    <location>
        <begin position="1"/>
        <end position="113"/>
    </location>
</feature>
<feature type="short sequence motif" description="Q motif">
    <location>
        <begin position="148"/>
        <end position="176"/>
    </location>
</feature>
<feature type="short sequence motif" description="DEAD box">
    <location>
        <begin position="297"/>
        <end position="300"/>
    </location>
</feature>
<feature type="compositionally biased region" description="Low complexity" evidence="4">
    <location>
        <begin position="72"/>
        <end position="81"/>
    </location>
</feature>
<feature type="binding site" evidence="2">
    <location>
        <begin position="194"/>
        <end position="201"/>
    </location>
    <ligand>
        <name>ATP</name>
        <dbReference type="ChEBI" id="CHEBI:30616"/>
    </ligand>
</feature>
<proteinExistence type="inferred from homology"/>
<sequence length="546" mass="59429">MSDAQAPPASTSWADMVDEDEKQKQEQNMSNQNDGWGETATETSAPAPPPASAPVSSSNNDGWGEPAPSAPADNGWADAGASNGGSGANNNDGWFDAPVPPSSQPPKKEASDIQLQDDTEGLITNTFQVEVKLADLQGDPNSPLYSVQSFKELNLHEDLMKGIIAAGFQKPSKIQEKALPLLLSNPPRNLIGQSQSGTGKTAAFTLNMLSRVDPTIPTPQAICIAPSRELARQIQEVVDQIGQFTQVGTFLAIPGSWSRNSRIDKQILIGTPGTLVDMLMRGSRILDPRMIRVLVLDEADELIAQQGLGEQTFRIKQLLPPNVQNVLFSATFNDDVQEFADRFAPEANKIFLRKEDITVDAIRQLYLECDSEDQKYEALSALYDCLVIGQSIVFCKRKVTADHIAERLISEGHAVASLHGDKLSQERDAILDGFRNGETKVLITTNVIARGIDIPAVNMVVNYDVPDLGPGGNGPDIETYIHRIGRTGRFGRKGCSVIFTHDYRSKSDVERIMNTLGKPMKKIDARSTTDIEQLEKALKLAMKGPA</sequence>
<evidence type="ECO:0000250" key="1"/>
<evidence type="ECO:0000255" key="2">
    <source>
        <dbReference type="PROSITE-ProRule" id="PRU00541"/>
    </source>
</evidence>
<evidence type="ECO:0000255" key="3">
    <source>
        <dbReference type="PROSITE-ProRule" id="PRU00542"/>
    </source>
</evidence>
<evidence type="ECO:0000256" key="4">
    <source>
        <dbReference type="SAM" id="MobiDB-lite"/>
    </source>
</evidence>
<evidence type="ECO:0000305" key="5"/>
<name>DBP5_CRYNB</name>